<proteinExistence type="inferred from homology"/>
<geneLocation type="mitochondrion"/>
<keyword id="KW-0249">Electron transport</keyword>
<keyword id="KW-0349">Heme</keyword>
<keyword id="KW-0408">Iron</keyword>
<keyword id="KW-0472">Membrane</keyword>
<keyword id="KW-0479">Metal-binding</keyword>
<keyword id="KW-0496">Mitochondrion</keyword>
<keyword id="KW-0999">Mitochondrion inner membrane</keyword>
<keyword id="KW-0679">Respiratory chain</keyword>
<keyword id="KW-0812">Transmembrane</keyword>
<keyword id="KW-1133">Transmembrane helix</keyword>
<keyword id="KW-0813">Transport</keyword>
<keyword id="KW-0830">Ubiquinone</keyword>
<name>CYB_MARAM</name>
<feature type="chain" id="PRO_0000061151" description="Cytochrome b">
    <location>
        <begin position="1"/>
        <end position="379"/>
    </location>
</feature>
<feature type="transmembrane region" description="Helical" evidence="2">
    <location>
        <begin position="33"/>
        <end position="53"/>
    </location>
</feature>
<feature type="transmembrane region" description="Helical" evidence="2">
    <location>
        <begin position="77"/>
        <end position="98"/>
    </location>
</feature>
<feature type="transmembrane region" description="Helical" evidence="2">
    <location>
        <begin position="113"/>
        <end position="133"/>
    </location>
</feature>
<feature type="transmembrane region" description="Helical" evidence="2">
    <location>
        <begin position="178"/>
        <end position="198"/>
    </location>
</feature>
<feature type="transmembrane region" description="Helical" evidence="2">
    <location>
        <begin position="226"/>
        <end position="246"/>
    </location>
</feature>
<feature type="transmembrane region" description="Helical" evidence="2">
    <location>
        <begin position="288"/>
        <end position="308"/>
    </location>
</feature>
<feature type="transmembrane region" description="Helical" evidence="2">
    <location>
        <begin position="320"/>
        <end position="340"/>
    </location>
</feature>
<feature type="transmembrane region" description="Helical" evidence="2">
    <location>
        <begin position="347"/>
        <end position="367"/>
    </location>
</feature>
<feature type="binding site" description="axial binding residue" evidence="2">
    <location>
        <position position="83"/>
    </location>
    <ligand>
        <name>heme b</name>
        <dbReference type="ChEBI" id="CHEBI:60344"/>
        <label>b562</label>
    </ligand>
    <ligandPart>
        <name>Fe</name>
        <dbReference type="ChEBI" id="CHEBI:18248"/>
    </ligandPart>
</feature>
<feature type="binding site" description="axial binding residue" evidence="2">
    <location>
        <position position="97"/>
    </location>
    <ligand>
        <name>heme b</name>
        <dbReference type="ChEBI" id="CHEBI:60344"/>
        <label>b566</label>
    </ligand>
    <ligandPart>
        <name>Fe</name>
        <dbReference type="ChEBI" id="CHEBI:18248"/>
    </ligandPart>
</feature>
<feature type="binding site" description="axial binding residue" evidence="2">
    <location>
        <position position="182"/>
    </location>
    <ligand>
        <name>heme b</name>
        <dbReference type="ChEBI" id="CHEBI:60344"/>
        <label>b562</label>
    </ligand>
    <ligandPart>
        <name>Fe</name>
        <dbReference type="ChEBI" id="CHEBI:18248"/>
    </ligandPart>
</feature>
<feature type="binding site" description="axial binding residue" evidence="2">
    <location>
        <position position="196"/>
    </location>
    <ligand>
        <name>heme b</name>
        <dbReference type="ChEBI" id="CHEBI:60344"/>
        <label>b566</label>
    </ligand>
    <ligandPart>
        <name>Fe</name>
        <dbReference type="ChEBI" id="CHEBI:18248"/>
    </ligandPart>
</feature>
<feature type="binding site" evidence="2">
    <location>
        <position position="201"/>
    </location>
    <ligand>
        <name>a ubiquinone</name>
        <dbReference type="ChEBI" id="CHEBI:16389"/>
    </ligand>
</feature>
<gene>
    <name type="primary">MT-CYB</name>
    <name type="synonym">COB</name>
    <name type="synonym">CYTB</name>
    <name type="synonym">MTCYB</name>
</gene>
<accession>O78935</accession>
<protein>
    <recommendedName>
        <fullName>Cytochrome b</fullName>
    </recommendedName>
    <alternativeName>
        <fullName>Complex III subunit 3</fullName>
    </alternativeName>
    <alternativeName>
        <fullName>Complex III subunit III</fullName>
    </alternativeName>
    <alternativeName>
        <fullName>Cytochrome b-c1 complex subunit 3</fullName>
    </alternativeName>
    <alternativeName>
        <fullName>Ubiquinol-cytochrome-c reductase complex cytochrome b subunit</fullName>
    </alternativeName>
</protein>
<dbReference type="EMBL" id="AF057130">
    <property type="protein sequence ID" value="AAC33710.1"/>
    <property type="molecule type" value="Genomic_DNA"/>
</dbReference>
<dbReference type="SMR" id="O78935"/>
<dbReference type="GO" id="GO:0005743">
    <property type="term" value="C:mitochondrial inner membrane"/>
    <property type="evidence" value="ECO:0007669"/>
    <property type="project" value="UniProtKB-SubCell"/>
</dbReference>
<dbReference type="GO" id="GO:0045275">
    <property type="term" value="C:respiratory chain complex III"/>
    <property type="evidence" value="ECO:0007669"/>
    <property type="project" value="InterPro"/>
</dbReference>
<dbReference type="GO" id="GO:0046872">
    <property type="term" value="F:metal ion binding"/>
    <property type="evidence" value="ECO:0007669"/>
    <property type="project" value="UniProtKB-KW"/>
</dbReference>
<dbReference type="GO" id="GO:0008121">
    <property type="term" value="F:ubiquinol-cytochrome-c reductase activity"/>
    <property type="evidence" value="ECO:0007669"/>
    <property type="project" value="InterPro"/>
</dbReference>
<dbReference type="GO" id="GO:0006122">
    <property type="term" value="P:mitochondrial electron transport, ubiquinol to cytochrome c"/>
    <property type="evidence" value="ECO:0007669"/>
    <property type="project" value="TreeGrafter"/>
</dbReference>
<dbReference type="CDD" id="cd00290">
    <property type="entry name" value="cytochrome_b_C"/>
    <property type="match status" value="1"/>
</dbReference>
<dbReference type="CDD" id="cd00284">
    <property type="entry name" value="Cytochrome_b_N"/>
    <property type="match status" value="1"/>
</dbReference>
<dbReference type="FunFam" id="1.20.810.10:FF:000002">
    <property type="entry name" value="Cytochrome b"/>
    <property type="match status" value="1"/>
</dbReference>
<dbReference type="Gene3D" id="1.20.810.10">
    <property type="entry name" value="Cytochrome Bc1 Complex, Chain C"/>
    <property type="match status" value="1"/>
</dbReference>
<dbReference type="InterPro" id="IPR005798">
    <property type="entry name" value="Cyt_b/b6_C"/>
</dbReference>
<dbReference type="InterPro" id="IPR036150">
    <property type="entry name" value="Cyt_b/b6_C_sf"/>
</dbReference>
<dbReference type="InterPro" id="IPR005797">
    <property type="entry name" value="Cyt_b/b6_N"/>
</dbReference>
<dbReference type="InterPro" id="IPR027387">
    <property type="entry name" value="Cytb/b6-like_sf"/>
</dbReference>
<dbReference type="InterPro" id="IPR030689">
    <property type="entry name" value="Cytochrome_b"/>
</dbReference>
<dbReference type="InterPro" id="IPR048260">
    <property type="entry name" value="Cytochrome_b_C_euk/bac"/>
</dbReference>
<dbReference type="InterPro" id="IPR048259">
    <property type="entry name" value="Cytochrome_b_N_euk/bac"/>
</dbReference>
<dbReference type="InterPro" id="IPR016174">
    <property type="entry name" value="Di-haem_cyt_TM"/>
</dbReference>
<dbReference type="PANTHER" id="PTHR19271">
    <property type="entry name" value="CYTOCHROME B"/>
    <property type="match status" value="1"/>
</dbReference>
<dbReference type="PANTHER" id="PTHR19271:SF16">
    <property type="entry name" value="CYTOCHROME B"/>
    <property type="match status" value="1"/>
</dbReference>
<dbReference type="Pfam" id="PF00032">
    <property type="entry name" value="Cytochrom_B_C"/>
    <property type="match status" value="1"/>
</dbReference>
<dbReference type="Pfam" id="PF00033">
    <property type="entry name" value="Cytochrome_B"/>
    <property type="match status" value="1"/>
</dbReference>
<dbReference type="PIRSF" id="PIRSF038885">
    <property type="entry name" value="COB"/>
    <property type="match status" value="1"/>
</dbReference>
<dbReference type="SUPFAM" id="SSF81648">
    <property type="entry name" value="a domain/subunit of cytochrome bc1 complex (Ubiquinol-cytochrome c reductase)"/>
    <property type="match status" value="1"/>
</dbReference>
<dbReference type="SUPFAM" id="SSF81342">
    <property type="entry name" value="Transmembrane di-heme cytochromes"/>
    <property type="match status" value="1"/>
</dbReference>
<dbReference type="PROSITE" id="PS51003">
    <property type="entry name" value="CYTB_CTER"/>
    <property type="match status" value="1"/>
</dbReference>
<dbReference type="PROSITE" id="PS51002">
    <property type="entry name" value="CYTB_NTER"/>
    <property type="match status" value="1"/>
</dbReference>
<evidence type="ECO:0000250" key="1"/>
<evidence type="ECO:0000250" key="2">
    <source>
        <dbReference type="UniProtKB" id="P00157"/>
    </source>
</evidence>
<evidence type="ECO:0000255" key="3">
    <source>
        <dbReference type="PROSITE-ProRule" id="PRU00967"/>
    </source>
</evidence>
<evidence type="ECO:0000255" key="4">
    <source>
        <dbReference type="PROSITE-ProRule" id="PRU00968"/>
    </source>
</evidence>
<comment type="function">
    <text evidence="2">Component of the ubiquinol-cytochrome c reductase complex (complex III or cytochrome b-c1 complex) that is part of the mitochondrial respiratory chain. The b-c1 complex mediates electron transfer from ubiquinol to cytochrome c. Contributes to the generation of a proton gradient across the mitochondrial membrane that is then used for ATP synthesis.</text>
</comment>
<comment type="cofactor">
    <cofactor evidence="2">
        <name>heme b</name>
        <dbReference type="ChEBI" id="CHEBI:60344"/>
    </cofactor>
    <text evidence="2">Binds 2 heme b groups non-covalently.</text>
</comment>
<comment type="subunit">
    <text evidence="2">The cytochrome bc1 complex contains 11 subunits: 3 respiratory subunits (MT-CYB, CYC1 and UQCRFS1), 2 core proteins (UQCRC1 and UQCRC2) and 6 low-molecular weight proteins (UQCRH/QCR6, UQCRB/QCR7, UQCRQ/QCR8, UQCR10/QCR9, UQCR11/QCR10 and a cleavage product of UQCRFS1). This cytochrome bc1 complex then forms a dimer.</text>
</comment>
<comment type="subcellular location">
    <subcellularLocation>
        <location evidence="2">Mitochondrion inner membrane</location>
        <topology evidence="2">Multi-pass membrane protein</topology>
    </subcellularLocation>
</comment>
<comment type="miscellaneous">
    <text evidence="1">Heme 1 (or BL or b562) is low-potential and absorbs at about 562 nm, and heme 2 (or BH or b566) is high-potential and absorbs at about 566 nm.</text>
</comment>
<comment type="similarity">
    <text evidence="3 4">Belongs to the cytochrome b family.</text>
</comment>
<comment type="caution">
    <text evidence="2">The full-length protein contains only eight transmembrane helices, not nine as predicted by bioinformatics tools.</text>
</comment>
<reference key="1">
    <citation type="journal article" date="1998" name="J. Zool. (Lond.)">
        <title>Phylogenetic relationships of otters (Carnivora: Mustelidae) based on mitochondrial cytochrome b sequences.</title>
        <authorList>
            <person name="Koepfli K.-P."/>
            <person name="Wayne R.K."/>
        </authorList>
    </citation>
    <scope>NUCLEOTIDE SEQUENCE [GENOMIC DNA]</scope>
</reference>
<sequence>MTNIRKTHPLAKIINNSFIDLPAPSNISAWWNFGSLLGICLILQILTGLFLAMHYTSDTATAFSSVTHICRDVNYGWIIRYMHANGASMFFICLFLHVGRGLYYGSYMYPETWNIGIILLFAVMATAFMGYVLPWGQMSFWGATVITNLLSAIPYIGTSLVEWIWGGFSVDKATLTRFFAFHFILPFIVLALAAVHLLFLHETGSNNPSGIPSDSDKIPFHPYYTIKDILGALFLILALMMLVLFSPDLLGDPDNYIPANPLNTPPHIKPEWYFLFAYAILRSIPNKLGGVLALVFSILVLAIVPLLHTSKQRGMMFRPLSQCLFWLLVADLLTLTWIGGQPVEHPFITIGQLASILYFAILLILMPAISIIENNLLKW</sequence>
<organism>
    <name type="scientific">Martes americana</name>
    <name type="common">American marten</name>
    <name type="synonym">Mustela americanus</name>
    <dbReference type="NCBI Taxonomy" id="9660"/>
    <lineage>
        <taxon>Eukaryota</taxon>
        <taxon>Metazoa</taxon>
        <taxon>Chordata</taxon>
        <taxon>Craniata</taxon>
        <taxon>Vertebrata</taxon>
        <taxon>Euteleostomi</taxon>
        <taxon>Mammalia</taxon>
        <taxon>Eutheria</taxon>
        <taxon>Laurasiatheria</taxon>
        <taxon>Carnivora</taxon>
        <taxon>Caniformia</taxon>
        <taxon>Musteloidea</taxon>
        <taxon>Mustelidae</taxon>
        <taxon>Guloninae</taxon>
        <taxon>Martes</taxon>
    </lineage>
</organism>